<evidence type="ECO:0000250" key="1">
    <source>
        <dbReference type="UniProtKB" id="P53140"/>
    </source>
</evidence>
<evidence type="ECO:0000255" key="2"/>
<evidence type="ECO:0000256" key="3">
    <source>
        <dbReference type="SAM" id="MobiDB-lite"/>
    </source>
</evidence>
<evidence type="ECO:0000305" key="4"/>
<gene>
    <name type="primary">RMD9</name>
    <name type="ordered locus">KLLA0F10461g</name>
</gene>
<organism>
    <name type="scientific">Kluyveromyces lactis (strain ATCC 8585 / CBS 2359 / DSM 70799 / NBRC 1267 / NRRL Y-1140 / WM37)</name>
    <name type="common">Yeast</name>
    <name type="synonym">Candida sphaerica</name>
    <dbReference type="NCBI Taxonomy" id="284590"/>
    <lineage>
        <taxon>Eukaryota</taxon>
        <taxon>Fungi</taxon>
        <taxon>Dikarya</taxon>
        <taxon>Ascomycota</taxon>
        <taxon>Saccharomycotina</taxon>
        <taxon>Saccharomycetes</taxon>
        <taxon>Saccharomycetales</taxon>
        <taxon>Saccharomycetaceae</taxon>
        <taxon>Kluyveromyces</taxon>
    </lineage>
</organism>
<keyword id="KW-0472">Membrane</keyword>
<keyword id="KW-0496">Mitochondrion</keyword>
<keyword id="KW-0999">Mitochondrion inner membrane</keyword>
<keyword id="KW-0597">Phosphoprotein</keyword>
<keyword id="KW-1185">Reference proteome</keyword>
<keyword id="KW-0749">Sporulation</keyword>
<keyword id="KW-0809">Transit peptide</keyword>
<dbReference type="EMBL" id="CR382126">
    <property type="protein sequence ID" value="CAG98264.1"/>
    <property type="molecule type" value="Genomic_DNA"/>
</dbReference>
<dbReference type="RefSeq" id="XP_455556.1">
    <property type="nucleotide sequence ID" value="XM_455556.1"/>
</dbReference>
<dbReference type="SMR" id="Q6CKI3"/>
<dbReference type="FunCoup" id="Q6CKI3">
    <property type="interactions" value="63"/>
</dbReference>
<dbReference type="STRING" id="284590.Q6CKI3"/>
<dbReference type="PaxDb" id="284590-Q6CKI3"/>
<dbReference type="KEGG" id="kla:KLLA0_F10461g"/>
<dbReference type="eggNOG" id="ENOG502QUSW">
    <property type="taxonomic scope" value="Eukaryota"/>
</dbReference>
<dbReference type="HOGENOM" id="CLU_019840_0_0_1"/>
<dbReference type="InParanoid" id="Q6CKI3"/>
<dbReference type="OMA" id="EMKYGYL"/>
<dbReference type="Proteomes" id="UP000000598">
    <property type="component" value="Chromosome F"/>
</dbReference>
<dbReference type="GO" id="GO:0005743">
    <property type="term" value="C:mitochondrial inner membrane"/>
    <property type="evidence" value="ECO:0007669"/>
    <property type="project" value="UniProtKB-SubCell"/>
</dbReference>
<dbReference type="GO" id="GO:0030435">
    <property type="term" value="P:sporulation resulting in formation of a cellular spore"/>
    <property type="evidence" value="ECO:0007669"/>
    <property type="project" value="UniProtKB-KW"/>
</dbReference>
<name>RMD9_KLULA</name>
<sequence>MFRLVQQQTLKSRVPNQFVSASRNSLNSQFRFNSAVALERNPQQDPTTAAPAKSSSDKRNSKKKYENNEIIERNVKKVRNLRRNIKFDNFKNSPNSPAFSKLNALDDCLARGLEASSSRAPDGKFLDQSSLFWDSVSSSMNIYRELVITGDLNNHRASRVIQLMHVALKVNRTQLTSMNKKPDYDSQSFHKEMTNYLCESLREISGDILANRVSVSEHGAAHLLSSFKELLLYEETLNIWKAAVNSENKDIVKSFMFPNVVGVVLPLLYENGTTFEEIKKLYEKSASNTTRSHGSPSLVLGMIKTSLAANENEHALSLFQEMCTSEGFGVSPYAVLTGTHLAFIGECKDLYVAKSFFERALSKDMPYKINLQVSSVKQLIQNIWDQTHDFNEVVDVWTKATKYYGKDVSHGISSSLNSKFISIFFENYVTDKAAGLQHLQELVTAYDEMKAIDEPFLNIILTKCTVWQDRNIIESIEKSYELYHIPKTIVTYRIILKAMGSISVPNDVIREKWVQLIQKADQIGQTYIANADWAALRDATVTYTQEQFKNGGSYEMTTSDSYNPALEAANASGAFDDFNEPTSGTKHADHLNTQTNKEDNDRILLYYQLVKRYGVYCRDPKQYARITSGIALNFEVAQPYLGLVNTMDVSSIYVPPLRNFHLNH</sequence>
<reference key="1">
    <citation type="journal article" date="2004" name="Nature">
        <title>Genome evolution in yeasts.</title>
        <authorList>
            <person name="Dujon B."/>
            <person name="Sherman D."/>
            <person name="Fischer G."/>
            <person name="Durrens P."/>
            <person name="Casaregola S."/>
            <person name="Lafontaine I."/>
            <person name="de Montigny J."/>
            <person name="Marck C."/>
            <person name="Neuveglise C."/>
            <person name="Talla E."/>
            <person name="Goffard N."/>
            <person name="Frangeul L."/>
            <person name="Aigle M."/>
            <person name="Anthouard V."/>
            <person name="Babour A."/>
            <person name="Barbe V."/>
            <person name="Barnay S."/>
            <person name="Blanchin S."/>
            <person name="Beckerich J.-M."/>
            <person name="Beyne E."/>
            <person name="Bleykasten C."/>
            <person name="Boisrame A."/>
            <person name="Boyer J."/>
            <person name="Cattolico L."/>
            <person name="Confanioleri F."/>
            <person name="de Daruvar A."/>
            <person name="Despons L."/>
            <person name="Fabre E."/>
            <person name="Fairhead C."/>
            <person name="Ferry-Dumazet H."/>
            <person name="Groppi A."/>
            <person name="Hantraye F."/>
            <person name="Hennequin C."/>
            <person name="Jauniaux N."/>
            <person name="Joyet P."/>
            <person name="Kachouri R."/>
            <person name="Kerrest A."/>
            <person name="Koszul R."/>
            <person name="Lemaire M."/>
            <person name="Lesur I."/>
            <person name="Ma L."/>
            <person name="Muller H."/>
            <person name="Nicaud J.-M."/>
            <person name="Nikolski M."/>
            <person name="Oztas S."/>
            <person name="Ozier-Kalogeropoulos O."/>
            <person name="Pellenz S."/>
            <person name="Potier S."/>
            <person name="Richard G.-F."/>
            <person name="Straub M.-L."/>
            <person name="Suleau A."/>
            <person name="Swennen D."/>
            <person name="Tekaia F."/>
            <person name="Wesolowski-Louvel M."/>
            <person name="Westhof E."/>
            <person name="Wirth B."/>
            <person name="Zeniou-Meyer M."/>
            <person name="Zivanovic Y."/>
            <person name="Bolotin-Fukuhara M."/>
            <person name="Thierry A."/>
            <person name="Bouchier C."/>
            <person name="Caudron B."/>
            <person name="Scarpelli C."/>
            <person name="Gaillardin C."/>
            <person name="Weissenbach J."/>
            <person name="Wincker P."/>
            <person name="Souciet J.-L."/>
        </authorList>
    </citation>
    <scope>NUCLEOTIDE SEQUENCE [LARGE SCALE GENOMIC DNA]</scope>
    <source>
        <strain>ATCC 8585 / CBS 2359 / DSM 70799 / NBRC 1267 / NRRL Y-1140 / WM37</strain>
    </source>
</reference>
<feature type="transit peptide" description="Mitochondrion" evidence="2">
    <location>
        <begin position="1"/>
        <end position="32"/>
    </location>
</feature>
<feature type="chain" id="PRO_0000301785" description="RNA-binding protein RMD9, mitochondrial">
    <location>
        <begin position="33"/>
        <end position="664"/>
    </location>
</feature>
<feature type="region of interest" description="Disordered" evidence="3">
    <location>
        <begin position="38"/>
        <end position="68"/>
    </location>
</feature>
<feature type="compositionally biased region" description="Basic and acidic residues" evidence="3">
    <location>
        <begin position="55"/>
        <end position="68"/>
    </location>
</feature>
<proteinExistence type="inferred from homology"/>
<comment type="function">
    <text evidence="1">Binds the 3'-UTR of mitochondrial mRNAs. Involved in the processing or stability of mitochondrial mRNAs.</text>
</comment>
<comment type="subunit">
    <text evidence="1">Monomer.</text>
</comment>
<comment type="subcellular location">
    <subcellularLocation>
        <location evidence="1">Mitochondrion inner membrane</location>
        <topology evidence="1">Peripheral membrane protein</topology>
        <orientation evidence="1">Matrix side</orientation>
    </subcellularLocation>
</comment>
<comment type="PTM">
    <text evidence="1">Phosphorylated. Phosphorylation promotes binding to RNA.</text>
</comment>
<comment type="similarity">
    <text evidence="4">Belongs to the RMD9 family.</text>
</comment>
<protein>
    <recommendedName>
        <fullName evidence="1">RNA-binding protein RMD9, mitochondrial</fullName>
    </recommendedName>
</protein>
<accession>Q6CKI3</accession>